<feature type="chain" id="PRO_0000176314" description="Elongation factor 4">
    <location>
        <begin position="1"/>
        <end position="602"/>
    </location>
</feature>
<feature type="domain" description="tr-type G">
    <location>
        <begin position="7"/>
        <end position="189"/>
    </location>
</feature>
<feature type="binding site" evidence="1">
    <location>
        <begin position="19"/>
        <end position="24"/>
    </location>
    <ligand>
        <name>GTP</name>
        <dbReference type="ChEBI" id="CHEBI:37565"/>
    </ligand>
</feature>
<feature type="binding site" evidence="1">
    <location>
        <begin position="136"/>
        <end position="139"/>
    </location>
    <ligand>
        <name>GTP</name>
        <dbReference type="ChEBI" id="CHEBI:37565"/>
    </ligand>
</feature>
<dbReference type="EC" id="3.6.5.n1" evidence="1"/>
<dbReference type="EMBL" id="BX908798">
    <property type="protein sequence ID" value="CAF23046.1"/>
    <property type="molecule type" value="Genomic_DNA"/>
</dbReference>
<dbReference type="RefSeq" id="WP_011174872.1">
    <property type="nucleotide sequence ID" value="NC_005861.2"/>
</dbReference>
<dbReference type="SMR" id="Q6MEF3"/>
<dbReference type="STRING" id="264201.pc0322"/>
<dbReference type="KEGG" id="pcu:PC_RS01565"/>
<dbReference type="eggNOG" id="COG0481">
    <property type="taxonomic scope" value="Bacteria"/>
</dbReference>
<dbReference type="HOGENOM" id="CLU_009995_3_3_0"/>
<dbReference type="OrthoDB" id="9804431at2"/>
<dbReference type="Proteomes" id="UP000000529">
    <property type="component" value="Chromosome"/>
</dbReference>
<dbReference type="GO" id="GO:0005886">
    <property type="term" value="C:plasma membrane"/>
    <property type="evidence" value="ECO:0007669"/>
    <property type="project" value="UniProtKB-SubCell"/>
</dbReference>
<dbReference type="GO" id="GO:0005525">
    <property type="term" value="F:GTP binding"/>
    <property type="evidence" value="ECO:0007669"/>
    <property type="project" value="UniProtKB-UniRule"/>
</dbReference>
<dbReference type="GO" id="GO:0003924">
    <property type="term" value="F:GTPase activity"/>
    <property type="evidence" value="ECO:0007669"/>
    <property type="project" value="UniProtKB-UniRule"/>
</dbReference>
<dbReference type="GO" id="GO:0043022">
    <property type="term" value="F:ribosome binding"/>
    <property type="evidence" value="ECO:0007669"/>
    <property type="project" value="UniProtKB-UniRule"/>
</dbReference>
<dbReference type="GO" id="GO:0003746">
    <property type="term" value="F:translation elongation factor activity"/>
    <property type="evidence" value="ECO:0007669"/>
    <property type="project" value="UniProtKB-UniRule"/>
</dbReference>
<dbReference type="GO" id="GO:0045727">
    <property type="term" value="P:positive regulation of translation"/>
    <property type="evidence" value="ECO:0007669"/>
    <property type="project" value="UniProtKB-UniRule"/>
</dbReference>
<dbReference type="CDD" id="cd03699">
    <property type="entry name" value="EF4_II"/>
    <property type="match status" value="1"/>
</dbReference>
<dbReference type="CDD" id="cd16260">
    <property type="entry name" value="EF4_III"/>
    <property type="match status" value="1"/>
</dbReference>
<dbReference type="CDD" id="cd01890">
    <property type="entry name" value="LepA"/>
    <property type="match status" value="1"/>
</dbReference>
<dbReference type="CDD" id="cd03709">
    <property type="entry name" value="lepA_C"/>
    <property type="match status" value="1"/>
</dbReference>
<dbReference type="FunFam" id="3.40.50.300:FF:000078">
    <property type="entry name" value="Elongation factor 4"/>
    <property type="match status" value="1"/>
</dbReference>
<dbReference type="FunFam" id="2.40.30.10:FF:000015">
    <property type="entry name" value="Translation factor GUF1, mitochondrial"/>
    <property type="match status" value="1"/>
</dbReference>
<dbReference type="FunFam" id="3.30.70.240:FF:000007">
    <property type="entry name" value="Translation factor GUF1, mitochondrial"/>
    <property type="match status" value="1"/>
</dbReference>
<dbReference type="FunFam" id="3.30.70.2570:FF:000001">
    <property type="entry name" value="Translation factor GUF1, mitochondrial"/>
    <property type="match status" value="1"/>
</dbReference>
<dbReference type="FunFam" id="3.30.70.870:FF:000004">
    <property type="entry name" value="Translation factor GUF1, mitochondrial"/>
    <property type="match status" value="1"/>
</dbReference>
<dbReference type="Gene3D" id="3.30.70.240">
    <property type="match status" value="1"/>
</dbReference>
<dbReference type="Gene3D" id="3.30.70.2570">
    <property type="entry name" value="Elongation factor 4, C-terminal domain"/>
    <property type="match status" value="1"/>
</dbReference>
<dbReference type="Gene3D" id="3.30.70.870">
    <property type="entry name" value="Elongation Factor G (Translational Gtpase), domain 3"/>
    <property type="match status" value="1"/>
</dbReference>
<dbReference type="Gene3D" id="3.40.50.300">
    <property type="entry name" value="P-loop containing nucleotide triphosphate hydrolases"/>
    <property type="match status" value="1"/>
</dbReference>
<dbReference type="Gene3D" id="2.40.30.10">
    <property type="entry name" value="Translation factors"/>
    <property type="match status" value="1"/>
</dbReference>
<dbReference type="HAMAP" id="MF_00071">
    <property type="entry name" value="LepA"/>
    <property type="match status" value="1"/>
</dbReference>
<dbReference type="InterPro" id="IPR006297">
    <property type="entry name" value="EF-4"/>
</dbReference>
<dbReference type="InterPro" id="IPR035647">
    <property type="entry name" value="EFG_III/V"/>
</dbReference>
<dbReference type="InterPro" id="IPR000640">
    <property type="entry name" value="EFG_V-like"/>
</dbReference>
<dbReference type="InterPro" id="IPR004161">
    <property type="entry name" value="EFTu-like_2"/>
</dbReference>
<dbReference type="InterPro" id="IPR038363">
    <property type="entry name" value="LepA_C_sf"/>
</dbReference>
<dbReference type="InterPro" id="IPR013842">
    <property type="entry name" value="LepA_CTD"/>
</dbReference>
<dbReference type="InterPro" id="IPR035654">
    <property type="entry name" value="LepA_IV"/>
</dbReference>
<dbReference type="InterPro" id="IPR027417">
    <property type="entry name" value="P-loop_NTPase"/>
</dbReference>
<dbReference type="InterPro" id="IPR005225">
    <property type="entry name" value="Small_GTP-bd"/>
</dbReference>
<dbReference type="InterPro" id="IPR000795">
    <property type="entry name" value="T_Tr_GTP-bd_dom"/>
</dbReference>
<dbReference type="InterPro" id="IPR009000">
    <property type="entry name" value="Transl_B-barrel_sf"/>
</dbReference>
<dbReference type="NCBIfam" id="TIGR01393">
    <property type="entry name" value="lepA"/>
    <property type="match status" value="1"/>
</dbReference>
<dbReference type="NCBIfam" id="TIGR00231">
    <property type="entry name" value="small_GTP"/>
    <property type="match status" value="1"/>
</dbReference>
<dbReference type="PANTHER" id="PTHR43512:SF4">
    <property type="entry name" value="TRANSLATION FACTOR GUF1 HOMOLOG, CHLOROPLASTIC"/>
    <property type="match status" value="1"/>
</dbReference>
<dbReference type="PANTHER" id="PTHR43512">
    <property type="entry name" value="TRANSLATION FACTOR GUF1-RELATED"/>
    <property type="match status" value="1"/>
</dbReference>
<dbReference type="Pfam" id="PF00679">
    <property type="entry name" value="EFG_C"/>
    <property type="match status" value="1"/>
</dbReference>
<dbReference type="Pfam" id="PF00009">
    <property type="entry name" value="GTP_EFTU"/>
    <property type="match status" value="1"/>
</dbReference>
<dbReference type="Pfam" id="PF03144">
    <property type="entry name" value="GTP_EFTU_D2"/>
    <property type="match status" value="1"/>
</dbReference>
<dbReference type="Pfam" id="PF06421">
    <property type="entry name" value="LepA_C"/>
    <property type="match status" value="1"/>
</dbReference>
<dbReference type="PRINTS" id="PR00315">
    <property type="entry name" value="ELONGATNFCT"/>
</dbReference>
<dbReference type="SUPFAM" id="SSF54980">
    <property type="entry name" value="EF-G C-terminal domain-like"/>
    <property type="match status" value="2"/>
</dbReference>
<dbReference type="SUPFAM" id="SSF52540">
    <property type="entry name" value="P-loop containing nucleoside triphosphate hydrolases"/>
    <property type="match status" value="1"/>
</dbReference>
<dbReference type="SUPFAM" id="SSF50447">
    <property type="entry name" value="Translation proteins"/>
    <property type="match status" value="1"/>
</dbReference>
<dbReference type="PROSITE" id="PS51722">
    <property type="entry name" value="G_TR_2"/>
    <property type="match status" value="1"/>
</dbReference>
<reference key="1">
    <citation type="journal article" date="2004" name="Science">
        <title>Illuminating the evolutionary history of chlamydiae.</title>
        <authorList>
            <person name="Horn M."/>
            <person name="Collingro A."/>
            <person name="Schmitz-Esser S."/>
            <person name="Beier C.L."/>
            <person name="Purkhold U."/>
            <person name="Fartmann B."/>
            <person name="Brandt P."/>
            <person name="Nyakatura G.J."/>
            <person name="Droege M."/>
            <person name="Frishman D."/>
            <person name="Rattei T."/>
            <person name="Mewes H.-W."/>
            <person name="Wagner M."/>
        </authorList>
    </citation>
    <scope>NUCLEOTIDE SEQUENCE [LARGE SCALE GENOMIC DNA]</scope>
    <source>
        <strain>UWE25</strain>
    </source>
</reference>
<keyword id="KW-0997">Cell inner membrane</keyword>
<keyword id="KW-1003">Cell membrane</keyword>
<keyword id="KW-0342">GTP-binding</keyword>
<keyword id="KW-0378">Hydrolase</keyword>
<keyword id="KW-0472">Membrane</keyword>
<keyword id="KW-0547">Nucleotide-binding</keyword>
<keyword id="KW-0648">Protein biosynthesis</keyword>
<keyword id="KW-1185">Reference proteome</keyword>
<evidence type="ECO:0000255" key="1">
    <source>
        <dbReference type="HAMAP-Rule" id="MF_00071"/>
    </source>
</evidence>
<comment type="function">
    <text evidence="1">Required for accurate and efficient protein synthesis under certain stress conditions. May act as a fidelity factor of the translation reaction, by catalyzing a one-codon backward translocation of tRNAs on improperly translocated ribosomes. Back-translocation proceeds from a post-translocation (POST) complex to a pre-translocation (PRE) complex, thus giving elongation factor G a second chance to translocate the tRNAs correctly. Binds to ribosomes in a GTP-dependent manner.</text>
</comment>
<comment type="catalytic activity">
    <reaction evidence="1">
        <text>GTP + H2O = GDP + phosphate + H(+)</text>
        <dbReference type="Rhea" id="RHEA:19669"/>
        <dbReference type="ChEBI" id="CHEBI:15377"/>
        <dbReference type="ChEBI" id="CHEBI:15378"/>
        <dbReference type="ChEBI" id="CHEBI:37565"/>
        <dbReference type="ChEBI" id="CHEBI:43474"/>
        <dbReference type="ChEBI" id="CHEBI:58189"/>
        <dbReference type="EC" id="3.6.5.n1"/>
    </reaction>
</comment>
<comment type="subcellular location">
    <subcellularLocation>
        <location evidence="1">Cell inner membrane</location>
        <topology evidence="1">Peripheral membrane protein</topology>
        <orientation evidence="1">Cytoplasmic side</orientation>
    </subcellularLocation>
</comment>
<comment type="similarity">
    <text evidence="1">Belongs to the TRAFAC class translation factor GTPase superfamily. Classic translation factor GTPase family. LepA subfamily.</text>
</comment>
<proteinExistence type="inferred from homology"/>
<gene>
    <name evidence="1" type="primary">lepA</name>
    <name type="ordered locus">pc0322</name>
</gene>
<protein>
    <recommendedName>
        <fullName evidence="1">Elongation factor 4</fullName>
        <shortName evidence="1">EF-4</shortName>
        <ecNumber evidence="1">3.6.5.n1</ecNumber>
    </recommendedName>
    <alternativeName>
        <fullName evidence="1">Ribosomal back-translocase LepA</fullName>
    </alternativeName>
</protein>
<name>LEPA_PARUW</name>
<sequence>MHCHNLNNIRNFSIIAHIDHGKSTLADRLLELTNTVAARDMQEQLLDDMDLERERGITIKAHPVTMYYKGNDGQTYQINLIDTPGHVDFTYEVSRSLAACEGAILVVDAGQGVQAQSLANVHLALERNLEIVPVINKIDLPAADVEGVRKQIEDVIGLDASDAIGCSAKSGLGVKDVLERILTAVPPPQEPKDNLLRALVFDSHYDVYRGVMVYIRVMSGEIKRGSLIKMMATNKNFEVLEVGMFTPKEKPVEQLRPGEVGYMIANIKTPSDVKIGDTITLQKYPAPEALPGFKIISPVVFAGIYPIDATEFEGLRDALGKLQLNDSALHIEQESSTALGFGFRCGFLGLLHLEIVFERIQREFNIDIISTAPSVIYRFTLDDGVVKTVDNPAHYPDPTFIRMVEEPWVKCHIMIPSEYLGAIMNLGMDKRGVCTKTETMDARRLLLTYRLPLNEIITDFNDKLKSITKGYGSFDYEFDCYEPSEIIKLEIRVNEEPVDAFSCLVHRTKAESKGRAICAKLVEVIPMQLFKVPIQAAIGGKVVARETIRAITKNVTAKCYGGDISRKRKLWEKQKKGKKRMKEIGKVNIPQSAFMEVLKAGD</sequence>
<organism>
    <name type="scientific">Protochlamydia amoebophila (strain UWE25)</name>
    <dbReference type="NCBI Taxonomy" id="264201"/>
    <lineage>
        <taxon>Bacteria</taxon>
        <taxon>Pseudomonadati</taxon>
        <taxon>Chlamydiota</taxon>
        <taxon>Chlamydiia</taxon>
        <taxon>Parachlamydiales</taxon>
        <taxon>Parachlamydiaceae</taxon>
        <taxon>Candidatus Protochlamydia</taxon>
    </lineage>
</organism>
<accession>Q6MEF3</accession>